<feature type="chain" id="PRO_1000068623" description="UPF0325 protein YPDSF_1673">
    <location>
        <begin position="1"/>
        <end position="129"/>
    </location>
</feature>
<accession>A4TL96</accession>
<sequence>MYDNLKSLGITQPEDVDRYSLRQEANNDILKIYFRKDKGEFFAKSVKFKYPRQRKTVVSDNASHGYKEINEINPNLRYVIDELDQLCKRDQIEVDLKRKILDDLRHLESVVTNKIAEIEADLEKLTNGR</sequence>
<proteinExistence type="inferred from homology"/>
<dbReference type="EMBL" id="CP000668">
    <property type="protein sequence ID" value="ABP40058.1"/>
    <property type="molecule type" value="Genomic_DNA"/>
</dbReference>
<dbReference type="RefSeq" id="WP_002212127.1">
    <property type="nucleotide sequence ID" value="NZ_CP009715.1"/>
</dbReference>
<dbReference type="SMR" id="A4TL96"/>
<dbReference type="KEGG" id="ypp:YPDSF_1673"/>
<dbReference type="PATRIC" id="fig|386656.14.peg.2090"/>
<dbReference type="HAMAP" id="MF_01519">
    <property type="entry name" value="UPF0325"/>
    <property type="match status" value="1"/>
</dbReference>
<dbReference type="InterPro" id="IPR020911">
    <property type="entry name" value="UPF0325"/>
</dbReference>
<dbReference type="NCBIfam" id="NF010213">
    <property type="entry name" value="PRK13677.1"/>
    <property type="match status" value="1"/>
</dbReference>
<dbReference type="Pfam" id="PF11944">
    <property type="entry name" value="DUF3461"/>
    <property type="match status" value="1"/>
</dbReference>
<name>Y1673_YERPP</name>
<evidence type="ECO:0000255" key="1">
    <source>
        <dbReference type="HAMAP-Rule" id="MF_01519"/>
    </source>
</evidence>
<gene>
    <name type="ordered locus">YPDSF_1673</name>
</gene>
<protein>
    <recommendedName>
        <fullName evidence="1">UPF0325 protein YPDSF_1673</fullName>
    </recommendedName>
</protein>
<comment type="similarity">
    <text evidence="1">Belongs to the UPF0325 family.</text>
</comment>
<organism>
    <name type="scientific">Yersinia pestis (strain Pestoides F)</name>
    <dbReference type="NCBI Taxonomy" id="386656"/>
    <lineage>
        <taxon>Bacteria</taxon>
        <taxon>Pseudomonadati</taxon>
        <taxon>Pseudomonadota</taxon>
        <taxon>Gammaproteobacteria</taxon>
        <taxon>Enterobacterales</taxon>
        <taxon>Yersiniaceae</taxon>
        <taxon>Yersinia</taxon>
    </lineage>
</organism>
<reference key="1">
    <citation type="submission" date="2007-02" db="EMBL/GenBank/DDBJ databases">
        <title>Complete sequence of chromosome of Yersinia pestis Pestoides F.</title>
        <authorList>
            <consortium name="US DOE Joint Genome Institute"/>
            <person name="Copeland A."/>
            <person name="Lucas S."/>
            <person name="Lapidus A."/>
            <person name="Barry K."/>
            <person name="Detter J.C."/>
            <person name="Glavina del Rio T."/>
            <person name="Hammon N."/>
            <person name="Israni S."/>
            <person name="Dalin E."/>
            <person name="Tice H."/>
            <person name="Pitluck S."/>
            <person name="Di Bartolo G."/>
            <person name="Chain P."/>
            <person name="Malfatti S."/>
            <person name="Shin M."/>
            <person name="Vergez L."/>
            <person name="Schmutz J."/>
            <person name="Larimer F."/>
            <person name="Land M."/>
            <person name="Hauser L."/>
            <person name="Worsham P."/>
            <person name="Chu M."/>
            <person name="Bearden S."/>
            <person name="Garcia E."/>
            <person name="Richardson P."/>
        </authorList>
    </citation>
    <scope>NUCLEOTIDE SEQUENCE [LARGE SCALE GENOMIC DNA]</scope>
    <source>
        <strain>Pestoides F</strain>
    </source>
</reference>